<dbReference type="EMBL" id="AB008752">
    <property type="protein sequence ID" value="BAA23384.1"/>
    <property type="molecule type" value="mRNA"/>
</dbReference>
<dbReference type="SMR" id="O35116"/>
<dbReference type="IntAct" id="O35116">
    <property type="interactions" value="1"/>
</dbReference>
<dbReference type="MINT" id="O35116"/>
<dbReference type="STRING" id="10116.ENSRNOP00000045121"/>
<dbReference type="GlyGen" id="O35116">
    <property type="glycosylation" value="1 site, 1 O-linked glycan (1 site)"/>
</dbReference>
<dbReference type="SwissPalm" id="O35116"/>
<dbReference type="PaxDb" id="10116-ENSRNOP00000045121"/>
<dbReference type="UCSC" id="RGD:620734">
    <property type="organism name" value="rat"/>
</dbReference>
<dbReference type="AGR" id="RGD:620734"/>
<dbReference type="RGD" id="620734">
    <property type="gene designation" value="Ctnnd2"/>
</dbReference>
<dbReference type="eggNOG" id="KOG1048">
    <property type="taxonomic scope" value="Eukaryota"/>
</dbReference>
<dbReference type="InParanoid" id="O35116"/>
<dbReference type="PhylomeDB" id="O35116"/>
<dbReference type="Proteomes" id="UP000002494">
    <property type="component" value="Unplaced"/>
</dbReference>
<dbReference type="GO" id="GO:0005912">
    <property type="term" value="C:adherens junction"/>
    <property type="evidence" value="ECO:0007669"/>
    <property type="project" value="UniProtKB-SubCell"/>
</dbReference>
<dbReference type="GO" id="GO:0030425">
    <property type="term" value="C:dendrite"/>
    <property type="evidence" value="ECO:0007669"/>
    <property type="project" value="UniProtKB-SubCell"/>
</dbReference>
<dbReference type="GO" id="GO:0098978">
    <property type="term" value="C:glutamatergic synapse"/>
    <property type="evidence" value="ECO:0000314"/>
    <property type="project" value="SynGO"/>
</dbReference>
<dbReference type="GO" id="GO:0005634">
    <property type="term" value="C:nucleus"/>
    <property type="evidence" value="ECO:0007669"/>
    <property type="project" value="UniProtKB-SubCell"/>
</dbReference>
<dbReference type="GO" id="GO:0043204">
    <property type="term" value="C:perikaryon"/>
    <property type="evidence" value="ECO:0000250"/>
    <property type="project" value="UniProtKB"/>
</dbReference>
<dbReference type="GO" id="GO:0014069">
    <property type="term" value="C:postsynaptic density"/>
    <property type="evidence" value="ECO:0000314"/>
    <property type="project" value="SynGO"/>
</dbReference>
<dbReference type="GO" id="GO:0008013">
    <property type="term" value="F:beta-catenin binding"/>
    <property type="evidence" value="ECO:0000266"/>
    <property type="project" value="RGD"/>
</dbReference>
<dbReference type="GO" id="GO:0098919">
    <property type="term" value="F:structural constituent of postsynaptic density"/>
    <property type="evidence" value="ECO:0000314"/>
    <property type="project" value="SynGO"/>
</dbReference>
<dbReference type="GO" id="GO:0098609">
    <property type="term" value="P:cell-cell adhesion"/>
    <property type="evidence" value="ECO:0007669"/>
    <property type="project" value="InterPro"/>
</dbReference>
<dbReference type="GO" id="GO:0060997">
    <property type="term" value="P:dendritic spine morphogenesis"/>
    <property type="evidence" value="ECO:0000266"/>
    <property type="project" value="RGD"/>
</dbReference>
<dbReference type="GO" id="GO:0007612">
    <property type="term" value="P:learning"/>
    <property type="evidence" value="ECO:0000266"/>
    <property type="project" value="RGD"/>
</dbReference>
<dbReference type="GO" id="GO:0001763">
    <property type="term" value="P:morphogenesis of a branching structure"/>
    <property type="evidence" value="ECO:0000266"/>
    <property type="project" value="RGD"/>
</dbReference>
<dbReference type="GO" id="GO:0106028">
    <property type="term" value="P:neuron projection retraction"/>
    <property type="evidence" value="ECO:0000315"/>
    <property type="project" value="RGD"/>
</dbReference>
<dbReference type="GO" id="GO:0045773">
    <property type="term" value="P:positive regulation of axon extension"/>
    <property type="evidence" value="ECO:0000315"/>
    <property type="project" value="RGD"/>
</dbReference>
<dbReference type="GO" id="GO:0060828">
    <property type="term" value="P:regulation of canonical Wnt signaling pathway"/>
    <property type="evidence" value="ECO:0000266"/>
    <property type="project" value="RGD"/>
</dbReference>
<dbReference type="GO" id="GO:0099072">
    <property type="term" value="P:regulation of postsynaptic membrane neurotransmitter receptor levels"/>
    <property type="evidence" value="ECO:0000314"/>
    <property type="project" value="SynGO"/>
</dbReference>
<dbReference type="GO" id="GO:0048167">
    <property type="term" value="P:regulation of synaptic plasticity"/>
    <property type="evidence" value="ECO:0000266"/>
    <property type="project" value="RGD"/>
</dbReference>
<dbReference type="GO" id="GO:0050808">
    <property type="term" value="P:synapse organization"/>
    <property type="evidence" value="ECO:0000266"/>
    <property type="project" value="RGD"/>
</dbReference>
<dbReference type="FunFam" id="1.25.10.10:FF:001492">
    <property type="entry name" value="Catenin (cadherin-associated protein), delta 2b"/>
    <property type="match status" value="1"/>
</dbReference>
<dbReference type="Gene3D" id="1.25.10.10">
    <property type="entry name" value="Leucine-rich Repeat Variant"/>
    <property type="match status" value="1"/>
</dbReference>
<dbReference type="InterPro" id="IPR011989">
    <property type="entry name" value="ARM-like"/>
</dbReference>
<dbReference type="InterPro" id="IPR016024">
    <property type="entry name" value="ARM-type_fold"/>
</dbReference>
<dbReference type="InterPro" id="IPR000225">
    <property type="entry name" value="Armadillo"/>
</dbReference>
<dbReference type="InterPro" id="IPR028435">
    <property type="entry name" value="Plakophilin/d_Catenin"/>
</dbReference>
<dbReference type="PANTHER" id="PTHR10372:SF9">
    <property type="entry name" value="CATENIN DELTA-2"/>
    <property type="match status" value="1"/>
</dbReference>
<dbReference type="PANTHER" id="PTHR10372">
    <property type="entry name" value="PLAKOPHILLIN-RELATED"/>
    <property type="match status" value="1"/>
</dbReference>
<dbReference type="Pfam" id="PF00514">
    <property type="entry name" value="Arm"/>
    <property type="match status" value="2"/>
</dbReference>
<dbReference type="SMART" id="SM00185">
    <property type="entry name" value="ARM"/>
    <property type="match status" value="4"/>
</dbReference>
<dbReference type="SUPFAM" id="SSF48371">
    <property type="entry name" value="ARM repeat"/>
    <property type="match status" value="1"/>
</dbReference>
<dbReference type="PROSITE" id="PS50176">
    <property type="entry name" value="ARM_REPEAT"/>
    <property type="match status" value="2"/>
</dbReference>
<name>CTND2_RAT</name>
<reference key="1">
    <citation type="submission" date="1997-11" db="EMBL/GenBank/DDBJ databases">
        <title>cDNAs encoding presenilin associated proteins.</title>
        <authorList>
            <person name="Tanahashi H."/>
        </authorList>
    </citation>
    <scope>NUCLEOTIDE SEQUENCE [MRNA]</scope>
    <source>
        <strain>Wistar</strain>
        <tissue>Brain</tissue>
    </source>
</reference>
<reference key="2">
    <citation type="journal article" date="2000" name="J. Biol. Chem.">
        <title>A novel multiple PSD-95/Dlg-A/ZO-1 protein interacting with neural plakophilin-related armadillo repeat protein/delta-catenin and p0071.</title>
        <authorList>
            <person name="Deguchi M."/>
            <person name="Iizuka T."/>
            <person name="Hata Y."/>
            <person name="Nishimura W."/>
            <person name="Hirao K."/>
            <person name="Yao I."/>
            <person name="Kawabe H."/>
            <person name="Takai Y."/>
        </authorList>
    </citation>
    <scope>INTERACTION WITH PDZD2</scope>
</reference>
<reference key="3">
    <citation type="journal article" date="2007" name="J. Cell. Biochem.">
        <title>cdk5 modulates beta- and delta-catenin/Pin1 interactions in neuronal cells.</title>
        <authorList>
            <person name="Munoz J.P."/>
            <person name="Huichalaf C.H."/>
            <person name="Orellana D."/>
            <person name="Maccioni R.B."/>
        </authorList>
    </citation>
    <scope>PHOSPHORYLATION BY CDK5</scope>
    <scope>INTERACTION WITH CDK5</scope>
    <scope>TISSUE SPECIFICITY</scope>
    <scope>SUBCELLULAR LOCATION</scope>
</reference>
<reference key="4">
    <citation type="journal article" date="2010" name="J. Neurosci. Res.">
        <title>Delta-catenin/NPRAP: A new member of the glycogen synthase kinase-3beta signaling complex that promotes beta-catenin turnover in neurons.</title>
        <authorList>
            <person name="Bareiss S."/>
            <person name="Kim K."/>
            <person name="Lu Q."/>
        </authorList>
    </citation>
    <scope>FUNCTION</scope>
    <scope>SUBCELLULAR LOCATION</scope>
</reference>
<reference key="5">
    <citation type="journal article" date="2015" name="Nature">
        <title>Loss of delta-catenin function in severe autism.</title>
        <authorList>
            <person name="Turner T.N."/>
            <person name="Sharma K."/>
            <person name="Oh E.C."/>
            <person name="Liu Y.P."/>
            <person name="Collins R.L."/>
            <person name="Sosa M.X."/>
            <person name="Auer D.R."/>
            <person name="Brand H."/>
            <person name="Sanders S.J."/>
            <person name="Moreno-De-Luca D."/>
            <person name="Pihur V."/>
            <person name="Plona T."/>
            <person name="Pike K."/>
            <person name="Soppet D.R."/>
            <person name="Smith M.W."/>
            <person name="Cheung S.W."/>
            <person name="Martin C.L."/>
            <person name="State M.W."/>
            <person name="Talkowski M.E."/>
            <person name="Cook E."/>
            <person name="Huganir R."/>
            <person name="Katsanis N."/>
            <person name="Chakravarti A."/>
        </authorList>
    </citation>
    <scope>FUNCTION</scope>
</reference>
<sequence>FPSVQSNAAAYLQHLCFGDNKIKAEIRRQGGIQLLVDLLDHRMTEVHRSACGALRNLVYGKANDDNKIALKNCGGIPALVRLLRKTTDLEIRELVTGVLWNLSSCDALKMPIIQDALAVLTNAVIIPHSGWENSPLQDDRKIQLHSSQVLRNATGCLRNVSSAGEEARRRMRECDGLTDALLYVIQSALGSSEIDSKTVENCVCILRNLSYRLAAETSQGQHMGTDELDGLLCGEANGKDAESSGCWGKKKKKKKSQDQWDGVG</sequence>
<comment type="function">
    <text evidence="2 3 7 8">Has a critical role in neuronal development, particularly in the formation and/or maintenance of dendritic spines and synapses (PubMed:25807484). Involved in the regulation of canonical Wnt signaling (By similarity). It probably acts on beta-catenin turnover, facilitating beta-catenin interaction with GSK3B, phosphorylation, ubiquitination and degradation (PubMed:20623542). May be involved in neuronal cell adhesion and tissue morphogenesis and integrity by regulating adhesion molecules. Functions as a transcriptional activator when bound to ZBTB33 (By similarity).</text>
</comment>
<comment type="subunit">
    <text evidence="2 3 5 6">Binds to E-cadherin at a juxtamembrane site within the cytoplasmic domain (By similarity). Binds to PSEN1 (By similarity). Interacts with ZBTB33 (By similarity). Interacts with ARHGEF28 (By similarity). Interacts (via the extreme C-terminus) with FRMPD2 (via the PDZ 2 domain) (By similarity). Interacts with PDZD2 (PubMed:10896674). Interacts with CDK5 (PubMed:17009320). Interacts with CTNBB1 (By similarity). Interacts with GSK3A and GSK3B (By similarity). Interacts with DNM2 (By similarity). Interacts with CCDC85B (By similarity).</text>
</comment>
<comment type="subcellular location">
    <subcellularLocation>
        <location evidence="2">Nucleus</location>
    </subcellularLocation>
    <subcellularLocation>
        <location evidence="2">Cell junction</location>
        <location evidence="2">Adherens junction</location>
    </subcellularLocation>
    <subcellularLocation>
        <location evidence="6 7">Cell projection</location>
        <location evidence="6 7">Dendrite</location>
    </subcellularLocation>
    <subcellularLocation>
        <location evidence="6 7">Perikaryon</location>
    </subcellularLocation>
</comment>
<comment type="tissue specificity">
    <text evidence="6">Predominantly expressed in brain; accumulates in cortical neurons (at protein level).</text>
</comment>
<comment type="PTM">
    <text evidence="1">O-glycosylated.</text>
</comment>
<comment type="PTM">
    <text evidence="2 6">Phosphorylated by CDK5 (PubMed:17009320). Phosphorylated by GSK3B (By similarity).</text>
</comment>
<comment type="similarity">
    <text evidence="9">Belongs to the beta-catenin family.</text>
</comment>
<organism>
    <name type="scientific">Rattus norvegicus</name>
    <name type="common">Rat</name>
    <dbReference type="NCBI Taxonomy" id="10116"/>
    <lineage>
        <taxon>Eukaryota</taxon>
        <taxon>Metazoa</taxon>
        <taxon>Chordata</taxon>
        <taxon>Craniata</taxon>
        <taxon>Vertebrata</taxon>
        <taxon>Euteleostomi</taxon>
        <taxon>Mammalia</taxon>
        <taxon>Eutheria</taxon>
        <taxon>Euarchontoglires</taxon>
        <taxon>Glires</taxon>
        <taxon>Rodentia</taxon>
        <taxon>Myomorpha</taxon>
        <taxon>Muroidea</taxon>
        <taxon>Muridae</taxon>
        <taxon>Murinae</taxon>
        <taxon>Rattus</taxon>
    </lineage>
</organism>
<accession>O35116</accession>
<gene>
    <name type="primary">Ctnnd2</name>
</gene>
<protein>
    <recommendedName>
        <fullName>Catenin delta-2</fullName>
    </recommendedName>
</protein>
<feature type="chain" id="PRO_0000064301" description="Catenin delta-2">
    <location>
        <begin position="1" status="less than"/>
        <end position="264" status="greater than"/>
    </location>
</feature>
<feature type="repeat" description="ARM 1">
    <location>
        <begin position="20"/>
        <end position="59"/>
    </location>
</feature>
<feature type="repeat" description="ARM 2">
    <location>
        <begin position="64"/>
        <end position="104"/>
    </location>
</feature>
<feature type="repeat" description="ARM 3">
    <location>
        <begin position="120"/>
        <end position="162"/>
    </location>
</feature>
<feature type="repeat" description="ARM 4">
    <location>
        <begin position="166"/>
        <end position="211"/>
    </location>
</feature>
<feature type="region of interest" description="Disordered" evidence="4">
    <location>
        <begin position="238"/>
        <end position="264"/>
    </location>
</feature>
<feature type="non-terminal residue">
    <location>
        <position position="1"/>
    </location>
</feature>
<feature type="non-terminal residue">
    <location>
        <position position="264"/>
    </location>
</feature>
<evidence type="ECO:0000250" key="1"/>
<evidence type="ECO:0000250" key="2">
    <source>
        <dbReference type="UniProtKB" id="O35927"/>
    </source>
</evidence>
<evidence type="ECO:0000250" key="3">
    <source>
        <dbReference type="UniProtKB" id="Q9UQB3"/>
    </source>
</evidence>
<evidence type="ECO:0000256" key="4">
    <source>
        <dbReference type="SAM" id="MobiDB-lite"/>
    </source>
</evidence>
<evidence type="ECO:0000269" key="5">
    <source>
    </source>
</evidence>
<evidence type="ECO:0000269" key="6">
    <source>
    </source>
</evidence>
<evidence type="ECO:0000269" key="7">
    <source>
    </source>
</evidence>
<evidence type="ECO:0000269" key="8">
    <source>
    </source>
</evidence>
<evidence type="ECO:0000305" key="9"/>
<keyword id="KW-0130">Cell adhesion</keyword>
<keyword id="KW-0965">Cell junction</keyword>
<keyword id="KW-0966">Cell projection</keyword>
<keyword id="KW-0217">Developmental protein</keyword>
<keyword id="KW-0325">Glycoprotein</keyword>
<keyword id="KW-0539">Nucleus</keyword>
<keyword id="KW-1185">Reference proteome</keyword>
<keyword id="KW-0677">Repeat</keyword>
<keyword id="KW-0804">Transcription</keyword>
<keyword id="KW-0805">Transcription regulation</keyword>
<proteinExistence type="evidence at protein level"/>